<dbReference type="EMBL" id="AE009951">
    <property type="protein sequence ID" value="AAL94633.1"/>
    <property type="molecule type" value="Genomic_DNA"/>
</dbReference>
<dbReference type="RefSeq" id="NP_603334.1">
    <property type="nucleotide sequence ID" value="NC_003454.1"/>
</dbReference>
<dbReference type="RefSeq" id="WP_005898626.1">
    <property type="nucleotide sequence ID" value="NZ_OZ209243.1"/>
</dbReference>
<dbReference type="SMR" id="Q8RG80"/>
<dbReference type="FunCoup" id="Q8RG80">
    <property type="interactions" value="347"/>
</dbReference>
<dbReference type="STRING" id="190304.FN0430"/>
<dbReference type="PaxDb" id="190304-FN0430"/>
<dbReference type="EnsemblBacteria" id="AAL94633">
    <property type="protein sequence ID" value="AAL94633"/>
    <property type="gene ID" value="FN0430"/>
</dbReference>
<dbReference type="GeneID" id="79783440"/>
<dbReference type="KEGG" id="fnu:FN0430"/>
<dbReference type="PATRIC" id="fig|190304.8.peg.1007"/>
<dbReference type="eggNOG" id="COG0335">
    <property type="taxonomic scope" value="Bacteria"/>
</dbReference>
<dbReference type="HOGENOM" id="CLU_103507_2_1_0"/>
<dbReference type="InParanoid" id="Q8RG80"/>
<dbReference type="BioCyc" id="FNUC190304:G1FZS-1024-MONOMER"/>
<dbReference type="Proteomes" id="UP000002521">
    <property type="component" value="Chromosome"/>
</dbReference>
<dbReference type="GO" id="GO:0022625">
    <property type="term" value="C:cytosolic large ribosomal subunit"/>
    <property type="evidence" value="ECO:0000318"/>
    <property type="project" value="GO_Central"/>
</dbReference>
<dbReference type="GO" id="GO:0003735">
    <property type="term" value="F:structural constituent of ribosome"/>
    <property type="evidence" value="ECO:0000318"/>
    <property type="project" value="GO_Central"/>
</dbReference>
<dbReference type="GO" id="GO:0006412">
    <property type="term" value="P:translation"/>
    <property type="evidence" value="ECO:0007669"/>
    <property type="project" value="UniProtKB-UniRule"/>
</dbReference>
<dbReference type="FunFam" id="2.30.30.790:FF:000006">
    <property type="entry name" value="50S ribosomal protein L19"/>
    <property type="match status" value="1"/>
</dbReference>
<dbReference type="Gene3D" id="2.30.30.790">
    <property type="match status" value="1"/>
</dbReference>
<dbReference type="HAMAP" id="MF_00402">
    <property type="entry name" value="Ribosomal_bL19"/>
    <property type="match status" value="1"/>
</dbReference>
<dbReference type="InterPro" id="IPR001857">
    <property type="entry name" value="Ribosomal_bL19"/>
</dbReference>
<dbReference type="InterPro" id="IPR018257">
    <property type="entry name" value="Ribosomal_bL19_CS"/>
</dbReference>
<dbReference type="InterPro" id="IPR038657">
    <property type="entry name" value="Ribosomal_bL19_sf"/>
</dbReference>
<dbReference type="InterPro" id="IPR008991">
    <property type="entry name" value="Translation_prot_SH3-like_sf"/>
</dbReference>
<dbReference type="NCBIfam" id="TIGR01024">
    <property type="entry name" value="rplS_bact"/>
    <property type="match status" value="1"/>
</dbReference>
<dbReference type="PANTHER" id="PTHR15680:SF9">
    <property type="entry name" value="LARGE RIBOSOMAL SUBUNIT PROTEIN BL19M"/>
    <property type="match status" value="1"/>
</dbReference>
<dbReference type="PANTHER" id="PTHR15680">
    <property type="entry name" value="RIBOSOMAL PROTEIN L19"/>
    <property type="match status" value="1"/>
</dbReference>
<dbReference type="Pfam" id="PF01245">
    <property type="entry name" value="Ribosomal_L19"/>
    <property type="match status" value="1"/>
</dbReference>
<dbReference type="PIRSF" id="PIRSF002191">
    <property type="entry name" value="Ribosomal_L19"/>
    <property type="match status" value="1"/>
</dbReference>
<dbReference type="PRINTS" id="PR00061">
    <property type="entry name" value="RIBOSOMALL19"/>
</dbReference>
<dbReference type="SUPFAM" id="SSF50104">
    <property type="entry name" value="Translation proteins SH3-like domain"/>
    <property type="match status" value="1"/>
</dbReference>
<dbReference type="PROSITE" id="PS01015">
    <property type="entry name" value="RIBOSOMAL_L19"/>
    <property type="match status" value="1"/>
</dbReference>
<sequence>MKEKLIELVEKEYLRSDIPQFKAGDTIGVYYKVKEGNKERVQLFEGVVIRVNGGGVAKTFTVRKVTAGIGVERIIPVNSPNIDRIEVLKVGRVRRSKLYYLRGLSAKKARIKEIVK</sequence>
<gene>
    <name evidence="1" type="primary">rplS</name>
    <name type="ordered locus">FN0430</name>
</gene>
<reference key="1">
    <citation type="journal article" date="2002" name="J. Bacteriol.">
        <title>Genome sequence and analysis of the oral bacterium Fusobacterium nucleatum strain ATCC 25586.</title>
        <authorList>
            <person name="Kapatral V."/>
            <person name="Anderson I."/>
            <person name="Ivanova N."/>
            <person name="Reznik G."/>
            <person name="Los T."/>
            <person name="Lykidis A."/>
            <person name="Bhattacharyya A."/>
            <person name="Bartman A."/>
            <person name="Gardner W."/>
            <person name="Grechkin G."/>
            <person name="Zhu L."/>
            <person name="Vasieva O."/>
            <person name="Chu L."/>
            <person name="Kogan Y."/>
            <person name="Chaga O."/>
            <person name="Goltsman E."/>
            <person name="Bernal A."/>
            <person name="Larsen N."/>
            <person name="D'Souza M."/>
            <person name="Walunas T."/>
            <person name="Pusch G."/>
            <person name="Haselkorn R."/>
            <person name="Fonstein M."/>
            <person name="Kyrpides N.C."/>
            <person name="Overbeek R."/>
        </authorList>
    </citation>
    <scope>NUCLEOTIDE SEQUENCE [LARGE SCALE GENOMIC DNA]</scope>
    <source>
        <strain>ATCC 25586 / DSM 15643 / BCRC 10681 / CIP 101130 / JCM 8532 / KCTC 2640 / LMG 13131 / VPI 4355</strain>
    </source>
</reference>
<organism>
    <name type="scientific">Fusobacterium nucleatum subsp. nucleatum (strain ATCC 25586 / DSM 15643 / BCRC 10681 / CIP 101130 / JCM 8532 / KCTC 2640 / LMG 13131 / VPI 4355)</name>
    <dbReference type="NCBI Taxonomy" id="190304"/>
    <lineage>
        <taxon>Bacteria</taxon>
        <taxon>Fusobacteriati</taxon>
        <taxon>Fusobacteriota</taxon>
        <taxon>Fusobacteriia</taxon>
        <taxon>Fusobacteriales</taxon>
        <taxon>Fusobacteriaceae</taxon>
        <taxon>Fusobacterium</taxon>
    </lineage>
</organism>
<accession>Q8RG80</accession>
<protein>
    <recommendedName>
        <fullName evidence="1">Large ribosomal subunit protein bL19</fullName>
    </recommendedName>
    <alternativeName>
        <fullName evidence="2">50S ribosomal protein L19</fullName>
    </alternativeName>
</protein>
<feature type="chain" id="PRO_0000163457" description="Large ribosomal subunit protein bL19">
    <location>
        <begin position="1"/>
        <end position="116"/>
    </location>
</feature>
<proteinExistence type="inferred from homology"/>
<evidence type="ECO:0000255" key="1">
    <source>
        <dbReference type="HAMAP-Rule" id="MF_00402"/>
    </source>
</evidence>
<evidence type="ECO:0000305" key="2"/>
<keyword id="KW-1185">Reference proteome</keyword>
<keyword id="KW-0687">Ribonucleoprotein</keyword>
<keyword id="KW-0689">Ribosomal protein</keyword>
<name>RL19_FUSNN</name>
<comment type="function">
    <text evidence="1">This protein is located at the 30S-50S ribosomal subunit interface and may play a role in the structure and function of the aminoacyl-tRNA binding site.</text>
</comment>
<comment type="similarity">
    <text evidence="1">Belongs to the bacterial ribosomal protein bL19 family.</text>
</comment>